<organism>
    <name type="scientific">Homo sapiens</name>
    <name type="common">Human</name>
    <dbReference type="NCBI Taxonomy" id="9606"/>
    <lineage>
        <taxon>Eukaryota</taxon>
        <taxon>Metazoa</taxon>
        <taxon>Chordata</taxon>
        <taxon>Craniata</taxon>
        <taxon>Vertebrata</taxon>
        <taxon>Euteleostomi</taxon>
        <taxon>Mammalia</taxon>
        <taxon>Eutheria</taxon>
        <taxon>Euarchontoglires</taxon>
        <taxon>Primates</taxon>
        <taxon>Haplorrhini</taxon>
        <taxon>Catarrhini</taxon>
        <taxon>Hominidae</taxon>
        <taxon>Homo</taxon>
    </lineage>
</organism>
<keyword id="KW-0002">3D-structure</keyword>
<keyword id="KW-0025">Alternative splicing</keyword>
<keyword id="KW-0965">Cell junction</keyword>
<keyword id="KW-0966">Cell projection</keyword>
<keyword id="KW-1186">Ciliopathy</keyword>
<keyword id="KW-0969">Cilium</keyword>
<keyword id="KW-0970">Cilium biogenesis/degradation</keyword>
<keyword id="KW-0175">Coiled coil</keyword>
<keyword id="KW-0963">Cytoplasm</keyword>
<keyword id="KW-0206">Cytoskeleton</keyword>
<keyword id="KW-0217">Developmental protein</keyword>
<keyword id="KW-0221">Differentiation</keyword>
<keyword id="KW-0225">Disease variant</keyword>
<keyword id="KW-0979">Joubert syndrome</keyword>
<keyword id="KW-0597">Phosphoprotein</keyword>
<keyword id="KW-1267">Proteomics identification</keyword>
<keyword id="KW-1185">Reference proteome</keyword>
<keyword id="KW-0677">Repeat</keyword>
<keyword id="KW-0728">SH3 domain</keyword>
<keyword id="KW-0853">WD repeat</keyword>
<proteinExistence type="evidence at protein level"/>
<comment type="function">
    <text evidence="1 11">Involved in vesicle trafficking and required for ciliogenesis, formation of primary non-motile cilium, and recruitment of RAB8A to the basal body of primary cilium. Component of the tectonic-like complex, a complex localized at the transition zone of primary cilia and acting as a barrier that prevents diffusion of transmembrane proteins between the cilia and plasma membranes. Involved in neuronal differentiation. As a positive modulator of classical Wnt signaling, may play a crucial role in ciliary signaling during cerebellum embryonic development (PubMed:21623382).</text>
</comment>
<comment type="subunit">
    <text evidence="1 10 11 13 14">Self-associates (PubMed:23532844). Part of the tectonic-like complex (also named B9 complex). Interacts with MKS1. Interacts with NPHP1; probably as heterodimers and/or AHI1(2):NPHP1(2) heterotetramers. Interacts (via SH3 domain) with the dynamin GTPase DNM2. Interacts with HAP1; probably as AHI1(2):HAP1(2) heterotetramers. Interacts with RAB8A (By similarity). Interacts with CEND1 (By similarity). Interacts with CTNNB1/beta-catenin (PubMed:21623382). Interacts with SPATA7 (By similarity).</text>
</comment>
<comment type="interaction">
    <interactant intactId="EBI-1049056">
        <id>Q8N157</id>
    </interactant>
    <interactant intactId="EBI-2625825">
        <id>O43184</id>
        <label>ADAM12</label>
    </interactant>
    <organismsDiffer>false</organismsDiffer>
    <experiments>2</experiments>
</comment>
<comment type="interaction">
    <interactant intactId="EBI-1049056">
        <id>Q8N157</id>
    </interactant>
    <interactant intactId="EBI-1049056">
        <id>Q8N157</id>
        <label>AHI1</label>
    </interactant>
    <organismsDiffer>false</organismsDiffer>
    <experiments>2</experiments>
</comment>
<comment type="interaction">
    <interactant intactId="EBI-1049056">
        <id>Q8N157</id>
    </interactant>
    <interactant intactId="EBI-346547">
        <id>P50570</id>
        <label>DNM2</label>
    </interactant>
    <organismsDiffer>false</organismsDiffer>
    <experiments>2</experiments>
</comment>
<comment type="interaction">
    <interactant intactId="EBI-1049056">
        <id>Q8N157</id>
    </interactant>
    <interactant intactId="EBI-712814">
        <id>P54257</id>
        <label>HAP1</label>
    </interactant>
    <organismsDiffer>false</organismsDiffer>
    <experiments>3</experiments>
</comment>
<comment type="interaction">
    <interactant intactId="EBI-1049056">
        <id>Q8N157</id>
    </interactant>
    <interactant intactId="EBI-953828">
        <id>O15259</id>
        <label>NPHP1</label>
    </interactant>
    <organismsDiffer>false</organismsDiffer>
    <experiments>4</experiments>
</comment>
<comment type="subcellular location">
    <subcellularLocation>
        <location evidence="11 14">Cytoplasm</location>
        <location evidence="11 14">Cytoskeleton</location>
        <location evidence="11 14">Cilium basal body</location>
    </subcellularLocation>
    <subcellularLocation>
        <location evidence="10 14">Cell junction</location>
        <location evidence="10 14">Adherens junction</location>
    </subcellularLocation>
    <subcellularLocation>
        <location evidence="1">Cytoplasm</location>
        <location evidence="1">Cytoskeleton</location>
        <location evidence="1">Microtubule organizing center</location>
        <location evidence="1">Centrosome</location>
        <location evidence="1">Centriole</location>
    </subcellularLocation>
    <text evidence="1">In the retinal photoreceptor cell layer, localizes at the connecting cilium.</text>
</comment>
<comment type="alternative products">
    <event type="alternative splicing"/>
    <isoform>
        <id>Q8N157-1</id>
        <name>1</name>
        <sequence type="displayed"/>
    </isoform>
    <isoform>
        <id>Q8N157-2</id>
        <name>2</name>
        <sequence type="described" ref="VSP_015355 VSP_015356"/>
    </isoform>
    <isoform>
        <id>Q8N157-3</id>
        <name>3</name>
        <sequence type="described" ref="VSP_015353 VSP_015354"/>
    </isoform>
</comment>
<comment type="tissue specificity">
    <text evidence="5 6 10">Highly expressed in the most primitive normal hematopoietic cells. Expressed in brain, particularly in neurons that give rise to the crossing axons of the corticospinal tract and superior cerebellar peduncles. Expressed in kidney (renal collecting duct cells) (at protein level).</text>
</comment>
<comment type="induction">
    <text evidence="5">Down-regulated during early differentiation of normal hematopoietic cells. Up-regulated in leukemic cells at all stages of differentiation from patients with chronic myeloid leukemia.</text>
</comment>
<comment type="disease" evidence="6 7 8 9 11 14">
    <disease id="DI-00606">
        <name>Joubert syndrome 3</name>
        <acronym>JBTS3</acronym>
        <description>A disorder presenting with cerebellar ataxia, oculomotor apraxia, hypotonia, neonatal breathing abnormalities and psychomotor delay. Neuroradiologically, it is characterized by cerebellar vermian hypoplasia/aplasia, thickened and reoriented superior cerebellar peduncles, and an abnormally large interpeduncular fossa, giving the appearance of a molar tooth on transaxial slices (molar tooth sign). Additional variable features include retinal dystrophy and renal disease. Joubert syndrome type 3 shows minimal extra central nervous system involvement and appears not to be associated with renal dysfunction.</description>
        <dbReference type="MIM" id="608629"/>
    </disease>
    <text>The disease is caused by variants affecting the gene represented in this entry.</text>
</comment>
<comment type="miscellaneous">
    <molecule>Isoform 3</molecule>
    <text evidence="17">May be produced at very low levels due to a premature stop codon in the mRNA, leading to nonsense-mediated mRNA decay.</text>
</comment>
<comment type="sequence caution" evidence="17">
    <conflict type="miscellaneous discrepancy">
        <sequence resource="EMBL-CDS" id="AAH29417"/>
    </conflict>
    <text>Contaminating sequence. Potential poly-A sequence.</text>
</comment>
<comment type="sequence caution" evidence="17">
    <conflict type="miscellaneous discrepancy">
        <sequence resource="EMBL-CDS" id="AAH65712"/>
    </conflict>
    <text>Contaminating sequence. Potential poly-A sequence.</text>
</comment>
<reference key="1">
    <citation type="journal article" date="2004" name="BMC Genomics">
        <title>Genome annotation of a 1.5 Mb region of human chromosome 6q23 encompassing a quantitative trait locus for fetal hemoglobin expression in adults.</title>
        <authorList>
            <person name="Close J.P."/>
            <person name="Game L."/>
            <person name="Clark B."/>
            <person name="Bergounioux J."/>
            <person name="Gerovassili A."/>
            <person name="Thein S.L."/>
        </authorList>
    </citation>
    <scope>NUCLEOTIDE SEQUENCE [MRNA] (ISOFORMS 1 AND 2)</scope>
    <source>
        <tissue>Small intestine</tissue>
    </source>
</reference>
<reference key="2">
    <citation type="submission" date="2005-06" db="EMBL/GenBank/DDBJ databases">
        <title>Full sequence of DKFZp686J1653.</title>
        <authorList>
            <person name="Westin E.H."/>
            <person name="Zhang Y."/>
        </authorList>
    </citation>
    <scope>NUCLEOTIDE SEQUENCE [MRNA] (ISOFORM 1)</scope>
</reference>
<reference key="3">
    <citation type="journal article" date="2001" name="Genome Res.">
        <title>Towards a catalog of human genes and proteins: sequencing and analysis of 500 novel complete protein coding human cDNAs.</title>
        <authorList>
            <person name="Wiemann S."/>
            <person name="Weil B."/>
            <person name="Wellenreuther R."/>
            <person name="Gassenhuber J."/>
            <person name="Glassl S."/>
            <person name="Ansorge W."/>
            <person name="Boecher M."/>
            <person name="Bloecker H."/>
            <person name="Bauersachs S."/>
            <person name="Blum H."/>
            <person name="Lauber J."/>
            <person name="Duesterhoeft A."/>
            <person name="Beyer A."/>
            <person name="Koehrer K."/>
            <person name="Strack N."/>
            <person name="Mewes H.-W."/>
            <person name="Ottenwaelder B."/>
            <person name="Obermaier B."/>
            <person name="Tampe J."/>
            <person name="Heubner D."/>
            <person name="Wambutt R."/>
            <person name="Korn B."/>
            <person name="Klein M."/>
            <person name="Poustka A."/>
        </authorList>
    </citation>
    <scope>NUCLEOTIDE SEQUENCE [LARGE SCALE MRNA] (ISOFORM 1)</scope>
    <source>
        <tissue>Testis</tissue>
    </source>
</reference>
<reference key="4">
    <citation type="journal article" date="2004" name="Nat. Genet.">
        <title>Complete sequencing and characterization of 21,243 full-length human cDNAs.</title>
        <authorList>
            <person name="Ota T."/>
            <person name="Suzuki Y."/>
            <person name="Nishikawa T."/>
            <person name="Otsuki T."/>
            <person name="Sugiyama T."/>
            <person name="Irie R."/>
            <person name="Wakamatsu A."/>
            <person name="Hayashi K."/>
            <person name="Sato H."/>
            <person name="Nagai K."/>
            <person name="Kimura K."/>
            <person name="Makita H."/>
            <person name="Sekine M."/>
            <person name="Obayashi M."/>
            <person name="Nishi T."/>
            <person name="Shibahara T."/>
            <person name="Tanaka T."/>
            <person name="Ishii S."/>
            <person name="Yamamoto J."/>
            <person name="Saito K."/>
            <person name="Kawai Y."/>
            <person name="Isono Y."/>
            <person name="Nakamura Y."/>
            <person name="Nagahari K."/>
            <person name="Murakami K."/>
            <person name="Yasuda T."/>
            <person name="Iwayanagi T."/>
            <person name="Wagatsuma M."/>
            <person name="Shiratori A."/>
            <person name="Sudo H."/>
            <person name="Hosoiri T."/>
            <person name="Kaku Y."/>
            <person name="Kodaira H."/>
            <person name="Kondo H."/>
            <person name="Sugawara M."/>
            <person name="Takahashi M."/>
            <person name="Kanda K."/>
            <person name="Yokoi T."/>
            <person name="Furuya T."/>
            <person name="Kikkawa E."/>
            <person name="Omura Y."/>
            <person name="Abe K."/>
            <person name="Kamihara K."/>
            <person name="Katsuta N."/>
            <person name="Sato K."/>
            <person name="Tanikawa M."/>
            <person name="Yamazaki M."/>
            <person name="Ninomiya K."/>
            <person name="Ishibashi T."/>
            <person name="Yamashita H."/>
            <person name="Murakawa K."/>
            <person name="Fujimori K."/>
            <person name="Tanai H."/>
            <person name="Kimata M."/>
            <person name="Watanabe M."/>
            <person name="Hiraoka S."/>
            <person name="Chiba Y."/>
            <person name="Ishida S."/>
            <person name="Ono Y."/>
            <person name="Takiguchi S."/>
            <person name="Watanabe S."/>
            <person name="Yosida M."/>
            <person name="Hotuta T."/>
            <person name="Kusano J."/>
            <person name="Kanehori K."/>
            <person name="Takahashi-Fujii A."/>
            <person name="Hara H."/>
            <person name="Tanase T.-O."/>
            <person name="Nomura Y."/>
            <person name="Togiya S."/>
            <person name="Komai F."/>
            <person name="Hara R."/>
            <person name="Takeuchi K."/>
            <person name="Arita M."/>
            <person name="Imose N."/>
            <person name="Musashino K."/>
            <person name="Yuuki H."/>
            <person name="Oshima A."/>
            <person name="Sasaki N."/>
            <person name="Aotsuka S."/>
            <person name="Yoshikawa Y."/>
            <person name="Matsunawa H."/>
            <person name="Ichihara T."/>
            <person name="Shiohata N."/>
            <person name="Sano S."/>
            <person name="Moriya S."/>
            <person name="Momiyama H."/>
            <person name="Satoh N."/>
            <person name="Takami S."/>
            <person name="Terashima Y."/>
            <person name="Suzuki O."/>
            <person name="Nakagawa S."/>
            <person name="Senoh A."/>
            <person name="Mizoguchi H."/>
            <person name="Goto Y."/>
            <person name="Shimizu F."/>
            <person name="Wakebe H."/>
            <person name="Hishigaki H."/>
            <person name="Watanabe T."/>
            <person name="Sugiyama A."/>
            <person name="Takemoto M."/>
            <person name="Kawakami B."/>
            <person name="Yamazaki M."/>
            <person name="Watanabe K."/>
            <person name="Kumagai A."/>
            <person name="Itakura S."/>
            <person name="Fukuzumi Y."/>
            <person name="Fujimori Y."/>
            <person name="Komiyama M."/>
            <person name="Tashiro H."/>
            <person name="Tanigami A."/>
            <person name="Fujiwara T."/>
            <person name="Ono T."/>
            <person name="Yamada K."/>
            <person name="Fujii Y."/>
            <person name="Ozaki K."/>
            <person name="Hirao M."/>
            <person name="Ohmori Y."/>
            <person name="Kawabata A."/>
            <person name="Hikiji T."/>
            <person name="Kobatake N."/>
            <person name="Inagaki H."/>
            <person name="Ikema Y."/>
            <person name="Okamoto S."/>
            <person name="Okitani R."/>
            <person name="Kawakami T."/>
            <person name="Noguchi S."/>
            <person name="Itoh T."/>
            <person name="Shigeta K."/>
            <person name="Senba T."/>
            <person name="Matsumura K."/>
            <person name="Nakajima Y."/>
            <person name="Mizuno T."/>
            <person name="Morinaga M."/>
            <person name="Sasaki M."/>
            <person name="Togashi T."/>
            <person name="Oyama M."/>
            <person name="Hata H."/>
            <person name="Watanabe M."/>
            <person name="Komatsu T."/>
            <person name="Mizushima-Sugano J."/>
            <person name="Satoh T."/>
            <person name="Shirai Y."/>
            <person name="Takahashi Y."/>
            <person name="Nakagawa K."/>
            <person name="Okumura K."/>
            <person name="Nagase T."/>
            <person name="Nomura N."/>
            <person name="Kikuchi H."/>
            <person name="Masuho Y."/>
            <person name="Yamashita R."/>
            <person name="Nakai K."/>
            <person name="Yada T."/>
            <person name="Nakamura Y."/>
            <person name="Ohara O."/>
            <person name="Isogai T."/>
            <person name="Sugano S."/>
        </authorList>
    </citation>
    <scope>NUCLEOTIDE SEQUENCE [LARGE SCALE MRNA] (ISOFORM 1)</scope>
</reference>
<reference key="5">
    <citation type="journal article" date="2003" name="Nature">
        <title>The DNA sequence and analysis of human chromosome 6.</title>
        <authorList>
            <person name="Mungall A.J."/>
            <person name="Palmer S.A."/>
            <person name="Sims S.K."/>
            <person name="Edwards C.A."/>
            <person name="Ashurst J.L."/>
            <person name="Wilming L."/>
            <person name="Jones M.C."/>
            <person name="Horton R."/>
            <person name="Hunt S.E."/>
            <person name="Scott C.E."/>
            <person name="Gilbert J.G.R."/>
            <person name="Clamp M.E."/>
            <person name="Bethel G."/>
            <person name="Milne S."/>
            <person name="Ainscough R."/>
            <person name="Almeida J.P."/>
            <person name="Ambrose K.D."/>
            <person name="Andrews T.D."/>
            <person name="Ashwell R.I.S."/>
            <person name="Babbage A.K."/>
            <person name="Bagguley C.L."/>
            <person name="Bailey J."/>
            <person name="Banerjee R."/>
            <person name="Barker D.J."/>
            <person name="Barlow K.F."/>
            <person name="Bates K."/>
            <person name="Beare D.M."/>
            <person name="Beasley H."/>
            <person name="Beasley O."/>
            <person name="Bird C.P."/>
            <person name="Blakey S.E."/>
            <person name="Bray-Allen S."/>
            <person name="Brook J."/>
            <person name="Brown A.J."/>
            <person name="Brown J.Y."/>
            <person name="Burford D.C."/>
            <person name="Burrill W."/>
            <person name="Burton J."/>
            <person name="Carder C."/>
            <person name="Carter N.P."/>
            <person name="Chapman J.C."/>
            <person name="Clark S.Y."/>
            <person name="Clark G."/>
            <person name="Clee C.M."/>
            <person name="Clegg S."/>
            <person name="Cobley V."/>
            <person name="Collier R.E."/>
            <person name="Collins J.E."/>
            <person name="Colman L.K."/>
            <person name="Corby N.R."/>
            <person name="Coville G.J."/>
            <person name="Culley K.M."/>
            <person name="Dhami P."/>
            <person name="Davies J."/>
            <person name="Dunn M."/>
            <person name="Earthrowl M.E."/>
            <person name="Ellington A.E."/>
            <person name="Evans K.A."/>
            <person name="Faulkner L."/>
            <person name="Francis M.D."/>
            <person name="Frankish A."/>
            <person name="Frankland J."/>
            <person name="French L."/>
            <person name="Garner P."/>
            <person name="Garnett J."/>
            <person name="Ghori M.J."/>
            <person name="Gilby L.M."/>
            <person name="Gillson C.J."/>
            <person name="Glithero R.J."/>
            <person name="Grafham D.V."/>
            <person name="Grant M."/>
            <person name="Gribble S."/>
            <person name="Griffiths C."/>
            <person name="Griffiths M.N.D."/>
            <person name="Hall R."/>
            <person name="Halls K.S."/>
            <person name="Hammond S."/>
            <person name="Harley J.L."/>
            <person name="Hart E.A."/>
            <person name="Heath P.D."/>
            <person name="Heathcott R."/>
            <person name="Holmes S.J."/>
            <person name="Howden P.J."/>
            <person name="Howe K.L."/>
            <person name="Howell G.R."/>
            <person name="Huckle E."/>
            <person name="Humphray S.J."/>
            <person name="Humphries M.D."/>
            <person name="Hunt A.R."/>
            <person name="Johnson C.M."/>
            <person name="Joy A.A."/>
            <person name="Kay M."/>
            <person name="Keenan S.J."/>
            <person name="Kimberley A.M."/>
            <person name="King A."/>
            <person name="Laird G.K."/>
            <person name="Langford C."/>
            <person name="Lawlor S."/>
            <person name="Leongamornlert D.A."/>
            <person name="Leversha M."/>
            <person name="Lloyd C.R."/>
            <person name="Lloyd D.M."/>
            <person name="Loveland J.E."/>
            <person name="Lovell J."/>
            <person name="Martin S."/>
            <person name="Mashreghi-Mohammadi M."/>
            <person name="Maslen G.L."/>
            <person name="Matthews L."/>
            <person name="McCann O.T."/>
            <person name="McLaren S.J."/>
            <person name="McLay K."/>
            <person name="McMurray A."/>
            <person name="Moore M.J.F."/>
            <person name="Mullikin J.C."/>
            <person name="Niblett D."/>
            <person name="Nickerson T."/>
            <person name="Novik K.L."/>
            <person name="Oliver K."/>
            <person name="Overton-Larty E.K."/>
            <person name="Parker A."/>
            <person name="Patel R."/>
            <person name="Pearce A.V."/>
            <person name="Peck A.I."/>
            <person name="Phillimore B.J.C.T."/>
            <person name="Phillips S."/>
            <person name="Plumb R.W."/>
            <person name="Porter K.M."/>
            <person name="Ramsey Y."/>
            <person name="Ranby S.A."/>
            <person name="Rice C.M."/>
            <person name="Ross M.T."/>
            <person name="Searle S.M."/>
            <person name="Sehra H.K."/>
            <person name="Sheridan E."/>
            <person name="Skuce C.D."/>
            <person name="Smith S."/>
            <person name="Smith M."/>
            <person name="Spraggon L."/>
            <person name="Squares S.L."/>
            <person name="Steward C.A."/>
            <person name="Sycamore N."/>
            <person name="Tamlyn-Hall G."/>
            <person name="Tester J."/>
            <person name="Theaker A.J."/>
            <person name="Thomas D.W."/>
            <person name="Thorpe A."/>
            <person name="Tracey A."/>
            <person name="Tromans A."/>
            <person name="Tubby B."/>
            <person name="Wall M."/>
            <person name="Wallis J.M."/>
            <person name="West A.P."/>
            <person name="White S.S."/>
            <person name="Whitehead S.L."/>
            <person name="Whittaker H."/>
            <person name="Wild A."/>
            <person name="Willey D.J."/>
            <person name="Wilmer T.E."/>
            <person name="Wood J.M."/>
            <person name="Wray P.W."/>
            <person name="Wyatt J.C."/>
            <person name="Young L."/>
            <person name="Younger R.M."/>
            <person name="Bentley D.R."/>
            <person name="Coulson A."/>
            <person name="Durbin R.M."/>
            <person name="Hubbard T."/>
            <person name="Sulston J.E."/>
            <person name="Dunham I."/>
            <person name="Rogers J."/>
            <person name="Beck S."/>
        </authorList>
    </citation>
    <scope>NUCLEOTIDE SEQUENCE [LARGE SCALE GENOMIC DNA]</scope>
</reference>
<reference key="6">
    <citation type="submission" date="2005-09" db="EMBL/GenBank/DDBJ databases">
        <authorList>
            <person name="Mural R.J."/>
            <person name="Istrail S."/>
            <person name="Sutton G.G."/>
            <person name="Florea L."/>
            <person name="Halpern A.L."/>
            <person name="Mobarry C.M."/>
            <person name="Lippert R."/>
            <person name="Walenz B."/>
            <person name="Shatkay H."/>
            <person name="Dew I."/>
            <person name="Miller J.R."/>
            <person name="Flanigan M.J."/>
            <person name="Edwards N.J."/>
            <person name="Bolanos R."/>
            <person name="Fasulo D."/>
            <person name="Halldorsson B.V."/>
            <person name="Hannenhalli S."/>
            <person name="Turner R."/>
            <person name="Yooseph S."/>
            <person name="Lu F."/>
            <person name="Nusskern D.R."/>
            <person name="Shue B.C."/>
            <person name="Zheng X.H."/>
            <person name="Zhong F."/>
            <person name="Delcher A.L."/>
            <person name="Huson D.H."/>
            <person name="Kravitz S.A."/>
            <person name="Mouchard L."/>
            <person name="Reinert K."/>
            <person name="Remington K.A."/>
            <person name="Clark A.G."/>
            <person name="Waterman M.S."/>
            <person name="Eichler E.E."/>
            <person name="Adams M.D."/>
            <person name="Hunkapiller M.W."/>
            <person name="Myers E.W."/>
            <person name="Venter J.C."/>
        </authorList>
    </citation>
    <scope>NUCLEOTIDE SEQUENCE [LARGE SCALE GENOMIC DNA]</scope>
</reference>
<reference key="7">
    <citation type="journal article" date="2004" name="Genome Res.">
        <title>The status, quality, and expansion of the NIH full-length cDNA project: the Mammalian Gene Collection (MGC).</title>
        <authorList>
            <consortium name="The MGC Project Team"/>
        </authorList>
    </citation>
    <scope>NUCLEOTIDE SEQUENCE [LARGE SCALE MRNA] (ISOFORM 3)</scope>
    <scope>NUCLEOTIDE SEQUENCE [LARGE SCALE MRNA] OF 1-301</scope>
    <source>
        <tissue>Bone marrow</tissue>
        <tissue>Testis</tissue>
    </source>
</reference>
<reference key="8">
    <citation type="journal article" date="2004" name="Blood">
        <title>Deregulated expression in Ph+ human leukemias of AHI-1, a gene activated by insertional mutagenesis in mouse models of leukemia.</title>
        <authorList>
            <person name="Jiang X."/>
            <person name="Zhao Y."/>
            <person name="Chan W.-Y."/>
            <person name="Vercauteren S."/>
            <person name="Pang E."/>
            <person name="Kennedy S."/>
            <person name="Nicolini F."/>
            <person name="Eaves A."/>
            <person name="Eaves C."/>
        </authorList>
    </citation>
    <scope>TISSUE SPECIFICITY</scope>
    <scope>INDUCTION</scope>
</reference>
<reference key="9">
    <citation type="journal article" date="2004" name="Nat. Genet.">
        <title>Abnormal cerebellar development and axonal decussation due to mutations in AHI1 in Joubert syndrome.</title>
        <authorList>
            <person name="Ferland R.J."/>
            <person name="Eyaid W."/>
            <person name="Collura R.V."/>
            <person name="Tully L.D."/>
            <person name="Hill R.S."/>
            <person name="Al-Nouri D."/>
            <person name="Al-Rumayyan A."/>
            <person name="Topcu M."/>
            <person name="Gascon G."/>
            <person name="Bodell A."/>
            <person name="Shugart Y.Y."/>
            <person name="Ruvolo M."/>
            <person name="Walsh C.A."/>
        </authorList>
    </citation>
    <scope>TISSUE SPECIFICITY</scope>
    <scope>VARIANT JBTS3 ASP-443</scope>
</reference>
<reference key="10">
    <citation type="journal article" date="2004" name="Nat. Genet.">
        <authorList>
            <person name="Ferland R.J."/>
            <person name="Eyaid W."/>
            <person name="Collura R.V."/>
            <person name="Tully L.D."/>
            <person name="Hill R.S."/>
            <person name="Al-Nouri D."/>
            <person name="Al-Rumayyan A."/>
            <person name="Topcu M."/>
            <person name="Gascon G."/>
            <person name="Bodell A."/>
            <person name="Shugart Y.Y."/>
            <person name="Ruvolo M."/>
            <person name="Walsh C.A."/>
        </authorList>
    </citation>
    <scope>ERRATUM OF PUBMED:15322546</scope>
</reference>
<reference key="11">
    <citation type="journal article" date="2008" name="Kidney Int.">
        <title>Jouberin localizes to collecting ducts and interacts with nephrocystin-1.</title>
        <authorList>
            <person name="Eley L."/>
            <person name="Gabrielides C."/>
            <person name="Adams M."/>
            <person name="Johnson C.A."/>
            <person name="Hildebrandt F."/>
            <person name="Sayer J.A."/>
        </authorList>
    </citation>
    <scope>INTERACTION WITH NPHP1</scope>
    <scope>SUBCELLULAR LOCATION</scope>
    <scope>TISSUE SPECIFICITY</scope>
</reference>
<reference key="12">
    <citation type="journal article" date="2008" name="Proc. Natl. Acad. Sci. U.S.A.">
        <title>A quantitative atlas of mitotic phosphorylation.</title>
        <authorList>
            <person name="Dephoure N."/>
            <person name="Zhou C."/>
            <person name="Villen J."/>
            <person name="Beausoleil S.A."/>
            <person name="Bakalarski C.E."/>
            <person name="Elledge S.J."/>
            <person name="Gygi S.P."/>
        </authorList>
    </citation>
    <scope>IDENTIFICATION BY MASS SPECTROMETRY [LARGE SCALE ANALYSIS]</scope>
    <source>
        <tissue>Cervix carcinoma</tissue>
    </source>
</reference>
<reference key="13">
    <citation type="journal article" date="2011" name="Nat. Med.">
        <title>Defective Wnt-dependent cerebellar midline fusion in a mouse model of Joubert syndrome.</title>
        <authorList>
            <person name="Lancaster M.A."/>
            <person name="Gopal D.J."/>
            <person name="Kim J."/>
            <person name="Saleem S.N."/>
            <person name="Silhavy J.L."/>
            <person name="Louie C.M."/>
            <person name="Thacker B.E."/>
            <person name="Williams Y."/>
            <person name="Zaki M.S."/>
            <person name="Gleeson J.G."/>
        </authorList>
    </citation>
    <scope>FUNCTION</scope>
    <scope>INTERACTION WITH CTNNB1</scope>
    <scope>SUBCELLULAR LOCATION</scope>
    <scope>CHARACTERIZATION OF VARIANTS JBTS3 ASP-443; GLN-723 AND ARG-896</scope>
</reference>
<reference key="14">
    <citation type="journal article" date="2013" name="J. Biol. Chem.">
        <title>The Joubert syndrome-associated missense mutation (V443D) in the Abelson-helper integration site 1 (AHI1) protein alters its localization and protein-protein interactions.</title>
        <authorList>
            <person name="Tuz K."/>
            <person name="Hsiao Y.C."/>
            <person name="Juarez O."/>
            <person name="Shi B."/>
            <person name="Harmon E.Y."/>
            <person name="Phelps I.G."/>
            <person name="Lennartz M.R."/>
            <person name="Glass I.A."/>
            <person name="Doherty D."/>
            <person name="Ferland R.J."/>
        </authorList>
    </citation>
    <scope>SELF-ASSOCIATION</scope>
    <scope>INTERACTION WITH NPHP1 AND HAP1</scope>
    <scope>SUBCELLULAR LOCATION</scope>
    <scope>VARIANT JBTS3 LEU-351</scope>
    <scope>CHARACTERIZATION OF VARIANTS JBTS3 LEU-351 AND ASP-443</scope>
</reference>
<reference key="15">
    <citation type="journal article" date="2013" name="J. Proteome Res.">
        <title>Toward a comprehensive characterization of a human cancer cell phosphoproteome.</title>
        <authorList>
            <person name="Zhou H."/>
            <person name="Di Palma S."/>
            <person name="Preisinger C."/>
            <person name="Peng M."/>
            <person name="Polat A.N."/>
            <person name="Heck A.J."/>
            <person name="Mohammed S."/>
        </authorList>
    </citation>
    <scope>PHOSPHORYLATION [LARGE SCALE ANALYSIS] AT SER-45; SER-1002 AND SER-1123</scope>
    <scope>IDENTIFICATION BY MASS SPECTROMETRY [LARGE SCALE ANALYSIS]</scope>
    <source>
        <tissue>Cervix carcinoma</tissue>
        <tissue>Erythroleukemia</tissue>
    </source>
</reference>
<reference key="16">
    <citation type="journal article" date="2012" name="Proteomics">
        <title>Molecular and structural characterization of the SH3 domain of AHI-1 in regulation of cellular resistance of BCR-ABL(+) chronic myeloid leukemia cells to tyrosine kinase inhibitors.</title>
        <authorList>
            <person name="Liu X."/>
            <person name="Chen M."/>
            <person name="Lobo P."/>
            <person name="An J."/>
            <person name="Grace Cheng S.W."/>
            <person name="Moradian A."/>
            <person name="Morin G.B."/>
            <person name="Van Petegem F."/>
            <person name="Jiang X."/>
        </authorList>
    </citation>
    <scope>X-RAY CRYSTALLOGRAPHY (1.53 ANGSTROMS) OF 1048-1116</scope>
    <scope>INTERACTION WITH DNM2</scope>
</reference>
<reference key="17">
    <citation type="journal article" date="2004" name="Am. J. Hum. Genet.">
        <title>Mutations in the AHI1 gene, encoding jouberin, cause Joubert syndrome with cortical polymicrogyria.</title>
        <authorList>
            <person name="Dixon-Salazar T."/>
            <person name="Silhavy J.L."/>
            <person name="Marsh S.E."/>
            <person name="Louie C.M."/>
            <person name="Scott L.C."/>
            <person name="Gururaj A."/>
            <person name="Al-Gazali L."/>
            <person name="Al-Tawari A.A."/>
            <person name="Kayserili H."/>
            <person name="Sztriha L."/>
            <person name="Gleeson J.G."/>
        </authorList>
    </citation>
    <scope>VARIANT JBTS3 ASP-443</scope>
</reference>
<reference key="18">
    <citation type="journal article" date="2006" name="Ann. Neurol.">
        <title>AHI1 gene mutations cause specific forms of Joubert syndrome-related disorders.</title>
        <authorList>
            <consortium name="International JSRD study group"/>
            <person name="Valente E.M."/>
            <person name="Brancati F."/>
            <person name="Silhavy J.L."/>
            <person name="Castori M."/>
            <person name="Marsh S.E."/>
            <person name="Barrano G."/>
            <person name="Bertini E."/>
            <person name="Boltshauser E."/>
            <person name="Zaki M.S."/>
            <person name="Abdel-Aleem A."/>
            <person name="Abdel-Salam G.M.H."/>
            <person name="Bellacchio E."/>
            <person name="Battini R."/>
            <person name="Cruse R.P."/>
            <person name="Dobyns W.B."/>
            <person name="Krishnamoorthy K.S."/>
            <person name="Lagier-Tourenne C."/>
            <person name="Magee A."/>
            <person name="Pascual-Castroviejo I."/>
            <person name="Salpietro C.D."/>
            <person name="Sarco D."/>
            <person name="Dallapiccola B."/>
            <person name="Gleeson J.G."/>
        </authorList>
    </citation>
    <scope>VARIANTS JBTS3 589-ARG--GLU-1196 DEL AND GLN-723</scope>
    <scope>VARIANTS ASN-49; HIS-548; LEU-761; TRP-830; SER-856; CYS-933; PHE-1123 AND SER-1140</scope>
</reference>
<reference key="19">
    <citation type="journal article" date="2006" name="J. Med. Genet.">
        <title>AHI1 mutations cause both retinal dystrophy and renal cystic disease in Joubert syndrome.</title>
        <authorList>
            <person name="Parisi M.A."/>
            <person name="Doherty D."/>
            <person name="Eckert M.L."/>
            <person name="Shaw D.W."/>
            <person name="Ozyurek H."/>
            <person name="Aysun S."/>
            <person name="Giray O."/>
            <person name="Al Swaid A."/>
            <person name="Al Shahwan S."/>
            <person name="Dohayan N."/>
            <person name="Bakhsh E."/>
            <person name="Indridason O.S."/>
            <person name="Dobyns W.B."/>
            <person name="Bennett C.L."/>
            <person name="Chance P.F."/>
            <person name="Glass I.A."/>
        </authorList>
    </citation>
    <scope>VARIANTS HIS-548 AND TRP-830</scope>
    <scope>VARIANTS JBTS3 ILE-671; GLY-719 AND ARG-896</scope>
</reference>
<reference key="20">
    <citation type="journal article" date="2012" name="Am. J. Hum. Genet.">
        <title>Mutations in C5ORF42 cause Joubert syndrome in the French Canadian population.</title>
        <authorList>
            <person name="Srour M."/>
            <person name="Schwartzentruber J."/>
            <person name="Hamdan F.F."/>
            <person name="Ospina L.H."/>
            <person name="Patry L."/>
            <person name="Labuda D."/>
            <person name="Massicotte C."/>
            <person name="Dobrzeniecka S."/>
            <person name="Capo-Chichi J.M."/>
            <person name="Papillon-Cavanagh S."/>
            <person name="Samuels M.E."/>
            <person name="Boycott K.M."/>
            <person name="Shevell M.I."/>
            <person name="Laframboise R."/>
            <person name="Desilets V."/>
            <person name="Maranda B."/>
            <person name="Rouleau G.A."/>
            <person name="Majewski J."/>
            <person name="Michaud J.L."/>
        </authorList>
    </citation>
    <scope>VARIANT GLY-1086</scope>
</reference>
<evidence type="ECO:0000250" key="1">
    <source>
        <dbReference type="UniProtKB" id="Q8K3E5"/>
    </source>
</evidence>
<evidence type="ECO:0000255" key="2"/>
<evidence type="ECO:0000255" key="3">
    <source>
        <dbReference type="PROSITE-ProRule" id="PRU00192"/>
    </source>
</evidence>
<evidence type="ECO:0000256" key="4">
    <source>
        <dbReference type="SAM" id="MobiDB-lite"/>
    </source>
</evidence>
<evidence type="ECO:0000269" key="5">
    <source>
    </source>
</evidence>
<evidence type="ECO:0000269" key="6">
    <source>
    </source>
</evidence>
<evidence type="ECO:0000269" key="7">
    <source>
    </source>
</evidence>
<evidence type="ECO:0000269" key="8">
    <source>
    </source>
</evidence>
<evidence type="ECO:0000269" key="9">
    <source>
    </source>
</evidence>
<evidence type="ECO:0000269" key="10">
    <source>
    </source>
</evidence>
<evidence type="ECO:0000269" key="11">
    <source>
    </source>
</evidence>
<evidence type="ECO:0000269" key="12">
    <source>
    </source>
</evidence>
<evidence type="ECO:0000269" key="13">
    <source>
    </source>
</evidence>
<evidence type="ECO:0000269" key="14">
    <source>
    </source>
</evidence>
<evidence type="ECO:0000303" key="15">
    <source>
    </source>
</evidence>
<evidence type="ECO:0000303" key="16">
    <source>
    </source>
</evidence>
<evidence type="ECO:0000305" key="17"/>
<evidence type="ECO:0007744" key="18">
    <source>
    </source>
</evidence>
<evidence type="ECO:0007829" key="19">
    <source>
        <dbReference type="PDB" id="4ESR"/>
    </source>
</evidence>
<dbReference type="EMBL" id="AJ459824">
    <property type="protein sequence ID" value="CAD30871.1"/>
    <property type="molecule type" value="mRNA"/>
</dbReference>
<dbReference type="EMBL" id="AJ459825">
    <property type="protein sequence ID" value="CAD30872.1"/>
    <property type="molecule type" value="mRNA"/>
</dbReference>
<dbReference type="EMBL" id="AJ606362">
    <property type="protein sequence ID" value="CAE54481.1"/>
    <property type="molecule type" value="mRNA"/>
</dbReference>
<dbReference type="EMBL" id="DQ090887">
    <property type="protein sequence ID" value="AAY99645.1"/>
    <property type="molecule type" value="mRNA"/>
</dbReference>
<dbReference type="EMBL" id="AL136797">
    <property type="protein sequence ID" value="CAB66731.1"/>
    <property type="molecule type" value="mRNA"/>
</dbReference>
<dbReference type="EMBL" id="AK092262">
    <property type="protein sequence ID" value="BAC03840.1"/>
    <property type="molecule type" value="mRNA"/>
</dbReference>
<dbReference type="EMBL" id="AL023693">
    <property type="status" value="NOT_ANNOTATED_CDS"/>
    <property type="molecule type" value="Genomic_DNA"/>
</dbReference>
<dbReference type="EMBL" id="AL049552">
    <property type="status" value="NOT_ANNOTATED_CDS"/>
    <property type="molecule type" value="Genomic_DNA"/>
</dbReference>
<dbReference type="EMBL" id="AL133544">
    <property type="status" value="NOT_ANNOTATED_CDS"/>
    <property type="molecule type" value="Genomic_DNA"/>
</dbReference>
<dbReference type="EMBL" id="CH471051">
    <property type="protein sequence ID" value="EAW47962.1"/>
    <property type="molecule type" value="Genomic_DNA"/>
</dbReference>
<dbReference type="EMBL" id="CH471051">
    <property type="protein sequence ID" value="EAW47963.1"/>
    <property type="molecule type" value="Genomic_DNA"/>
</dbReference>
<dbReference type="EMBL" id="BC029417">
    <property type="protein sequence ID" value="AAH29417.1"/>
    <property type="status" value="ALT_SEQ"/>
    <property type="molecule type" value="mRNA"/>
</dbReference>
<dbReference type="EMBL" id="BC065712">
    <property type="protein sequence ID" value="AAH65712.1"/>
    <property type="status" value="ALT_SEQ"/>
    <property type="molecule type" value="mRNA"/>
</dbReference>
<dbReference type="EMBL" id="BC094800">
    <property type="protein sequence ID" value="AAH94800.1"/>
    <property type="molecule type" value="mRNA"/>
</dbReference>
<dbReference type="CCDS" id="CCDS47483.1">
    <molecule id="Q8N157-1"/>
</dbReference>
<dbReference type="CCDS" id="CCDS47484.1">
    <molecule id="Q8N157-2"/>
</dbReference>
<dbReference type="RefSeq" id="NP_001128302.1">
    <molecule id="Q8N157-1"/>
    <property type="nucleotide sequence ID" value="NM_001134830.2"/>
</dbReference>
<dbReference type="RefSeq" id="NP_001128303.1">
    <molecule id="Q8N157-1"/>
    <property type="nucleotide sequence ID" value="NM_001134831.2"/>
</dbReference>
<dbReference type="RefSeq" id="NP_001128304.1">
    <molecule id="Q8N157-2"/>
    <property type="nucleotide sequence ID" value="NM_001134832.2"/>
</dbReference>
<dbReference type="RefSeq" id="NP_001337432.1">
    <molecule id="Q8N157-1"/>
    <property type="nucleotide sequence ID" value="NM_001350503.2"/>
</dbReference>
<dbReference type="RefSeq" id="NP_060121.3">
    <molecule id="Q8N157-1"/>
    <property type="nucleotide sequence ID" value="NM_017651.4"/>
</dbReference>
<dbReference type="RefSeq" id="XP_011534212.1">
    <molecule id="Q8N157-1"/>
    <property type="nucleotide sequence ID" value="XM_011535910.4"/>
</dbReference>
<dbReference type="RefSeq" id="XP_011534213.1">
    <molecule id="Q8N157-1"/>
    <property type="nucleotide sequence ID" value="XM_011535911.4"/>
</dbReference>
<dbReference type="RefSeq" id="XP_016866466.1">
    <property type="nucleotide sequence ID" value="XM_017010977.1"/>
</dbReference>
<dbReference type="RefSeq" id="XP_016866473.1">
    <molecule id="Q8N157-2"/>
    <property type="nucleotide sequence ID" value="XM_017010984.3"/>
</dbReference>
<dbReference type="RefSeq" id="XP_047274901.1">
    <molecule id="Q8N157-2"/>
    <property type="nucleotide sequence ID" value="XM_047418945.1"/>
</dbReference>
<dbReference type="RefSeq" id="XP_047274902.1">
    <molecule id="Q8N157-2"/>
    <property type="nucleotide sequence ID" value="XM_047418946.1"/>
</dbReference>
<dbReference type="RefSeq" id="XP_054211708.1">
    <molecule id="Q8N157-1"/>
    <property type="nucleotide sequence ID" value="XM_054355733.1"/>
</dbReference>
<dbReference type="RefSeq" id="XP_054211709.1">
    <molecule id="Q8N157-1"/>
    <property type="nucleotide sequence ID" value="XM_054355734.1"/>
</dbReference>
<dbReference type="RefSeq" id="XP_054211719.1">
    <molecule id="Q8N157-2"/>
    <property type="nucleotide sequence ID" value="XM_054355744.1"/>
</dbReference>
<dbReference type="RefSeq" id="XP_054211720.1">
    <molecule id="Q8N157-2"/>
    <property type="nucleotide sequence ID" value="XM_054355745.1"/>
</dbReference>
<dbReference type="RefSeq" id="XP_054211721.1">
    <molecule id="Q8N157-2"/>
    <property type="nucleotide sequence ID" value="XM_054355746.1"/>
</dbReference>
<dbReference type="PDB" id="4ESR">
    <property type="method" value="X-ray"/>
    <property type="resolution" value="1.53 A"/>
    <property type="chains" value="A/B=1048-1116"/>
</dbReference>
<dbReference type="PDBsum" id="4ESR"/>
<dbReference type="SMR" id="Q8N157"/>
<dbReference type="BioGRID" id="120163">
    <property type="interactions" value="55"/>
</dbReference>
<dbReference type="ComplexPortal" id="CPX-2531">
    <property type="entry name" value="MKS transition zone complex"/>
</dbReference>
<dbReference type="CORUM" id="Q8N157"/>
<dbReference type="FunCoup" id="Q8N157">
    <property type="interactions" value="429"/>
</dbReference>
<dbReference type="IntAct" id="Q8N157">
    <property type="interactions" value="38"/>
</dbReference>
<dbReference type="STRING" id="9606.ENSP00000265602"/>
<dbReference type="GlyGen" id="Q8N157">
    <property type="glycosylation" value="1 site, 1 O-linked glycan (1 site)"/>
</dbReference>
<dbReference type="iPTMnet" id="Q8N157"/>
<dbReference type="PhosphoSitePlus" id="Q8N157"/>
<dbReference type="BioMuta" id="AHI1"/>
<dbReference type="DMDM" id="73921659"/>
<dbReference type="jPOST" id="Q8N157"/>
<dbReference type="MassIVE" id="Q8N157"/>
<dbReference type="PaxDb" id="9606-ENSP00000356774"/>
<dbReference type="PeptideAtlas" id="Q8N157"/>
<dbReference type="ProteomicsDB" id="71560">
    <molecule id="Q8N157-1"/>
</dbReference>
<dbReference type="ProteomicsDB" id="71561">
    <molecule id="Q8N157-2"/>
</dbReference>
<dbReference type="ProteomicsDB" id="71562">
    <molecule id="Q8N157-3"/>
</dbReference>
<dbReference type="Pumba" id="Q8N157"/>
<dbReference type="Antibodypedia" id="32983">
    <property type="antibodies" value="196 antibodies from 30 providers"/>
</dbReference>
<dbReference type="DNASU" id="54806"/>
<dbReference type="Ensembl" id="ENST00000265602.11">
    <molecule id="Q8N157-1"/>
    <property type="protein sequence ID" value="ENSP00000265602.6"/>
    <property type="gene ID" value="ENSG00000135541.22"/>
</dbReference>
<dbReference type="Ensembl" id="ENST00000327035.10">
    <molecule id="Q8N157-2"/>
    <property type="protein sequence ID" value="ENSP00000322478.6"/>
    <property type="gene ID" value="ENSG00000135541.22"/>
</dbReference>
<dbReference type="Ensembl" id="ENST00000367800.8">
    <molecule id="Q8N157-1"/>
    <property type="protein sequence ID" value="ENSP00000356774.4"/>
    <property type="gene ID" value="ENSG00000135541.22"/>
</dbReference>
<dbReference type="Ensembl" id="ENST00000457866.6">
    <molecule id="Q8N157-1"/>
    <property type="protein sequence ID" value="ENSP00000388650.2"/>
    <property type="gene ID" value="ENSG00000135541.22"/>
</dbReference>
<dbReference type="Ensembl" id="ENST00000531788.5">
    <molecule id="Q8N157-3"/>
    <property type="protein sequence ID" value="ENSP00000432167.1"/>
    <property type="gene ID" value="ENSG00000135541.22"/>
</dbReference>
<dbReference type="Ensembl" id="ENST00000681022.1">
    <molecule id="Q8N157-1"/>
    <property type="protein sequence ID" value="ENSP00000505121.1"/>
    <property type="gene ID" value="ENSG00000135541.22"/>
</dbReference>
<dbReference type="Ensembl" id="ENST00000681340.1">
    <molecule id="Q8N157-1"/>
    <property type="protein sequence ID" value="ENSP00000505666.1"/>
    <property type="gene ID" value="ENSG00000135541.22"/>
</dbReference>
<dbReference type="Ensembl" id="ENST00000681365.1">
    <molecule id="Q8N157-1"/>
    <property type="protein sequence ID" value="ENSP00000506604.1"/>
    <property type="gene ID" value="ENSG00000135541.22"/>
</dbReference>
<dbReference type="Ensembl" id="ENST00000681522.1">
    <molecule id="Q8N157-1"/>
    <property type="protein sequence ID" value="ENSP00000506005.1"/>
    <property type="gene ID" value="ENSG00000135541.22"/>
</dbReference>
<dbReference type="Ensembl" id="ENST00000681841.1">
    <molecule id="Q8N157-1"/>
    <property type="protein sequence ID" value="ENSP00000504965.1"/>
    <property type="gene ID" value="ENSG00000135541.22"/>
</dbReference>
<dbReference type="GeneID" id="54806"/>
<dbReference type="KEGG" id="hsa:54806"/>
<dbReference type="MANE-Select" id="ENST00000265602.11">
    <property type="protein sequence ID" value="ENSP00000265602.6"/>
    <property type="RefSeq nucleotide sequence ID" value="NM_001134831.2"/>
    <property type="RefSeq protein sequence ID" value="NP_001128303.1"/>
</dbReference>
<dbReference type="UCSC" id="uc003qgh.4">
    <molecule id="Q8N157-1"/>
    <property type="organism name" value="human"/>
</dbReference>
<dbReference type="AGR" id="HGNC:21575"/>
<dbReference type="CTD" id="54806"/>
<dbReference type="DisGeNET" id="54806"/>
<dbReference type="GeneCards" id="AHI1"/>
<dbReference type="GeneReviews" id="AHI1"/>
<dbReference type="HGNC" id="HGNC:21575">
    <property type="gene designation" value="AHI1"/>
</dbReference>
<dbReference type="HPA" id="ENSG00000135541">
    <property type="expression patterns" value="Low tissue specificity"/>
</dbReference>
<dbReference type="MalaCards" id="AHI1"/>
<dbReference type="MIM" id="608629">
    <property type="type" value="phenotype"/>
</dbReference>
<dbReference type="MIM" id="608894">
    <property type="type" value="gene"/>
</dbReference>
<dbReference type="neXtProt" id="NX_Q8N157"/>
<dbReference type="OpenTargets" id="ENSG00000135541"/>
<dbReference type="Orphanet" id="475">
    <property type="disease" value="Joubert syndrome"/>
</dbReference>
<dbReference type="Orphanet" id="220493">
    <property type="disease" value="Joubert syndrome with ocular defect"/>
</dbReference>
<dbReference type="Orphanet" id="791">
    <property type="disease" value="Retinitis pigmentosa"/>
</dbReference>
<dbReference type="PharmGKB" id="PA134874587"/>
<dbReference type="VEuPathDB" id="HostDB:ENSG00000135541"/>
<dbReference type="eggNOG" id="KOG0266">
    <property type="taxonomic scope" value="Eukaryota"/>
</dbReference>
<dbReference type="GeneTree" id="ENSGT00940000156509"/>
<dbReference type="HOGENOM" id="CLU_007778_0_0_1"/>
<dbReference type="InParanoid" id="Q8N157"/>
<dbReference type="OMA" id="KSVIPEW"/>
<dbReference type="OrthoDB" id="2096344at2759"/>
<dbReference type="PAN-GO" id="Q8N157">
    <property type="GO annotations" value="2 GO annotations based on evolutionary models"/>
</dbReference>
<dbReference type="PhylomeDB" id="Q8N157"/>
<dbReference type="TreeFam" id="TF329226"/>
<dbReference type="PathwayCommons" id="Q8N157"/>
<dbReference type="Reactome" id="R-HSA-5620912">
    <property type="pathway name" value="Anchoring of the basal body to the plasma membrane"/>
</dbReference>
<dbReference type="SignaLink" id="Q8N157"/>
<dbReference type="SIGNOR" id="Q8N157"/>
<dbReference type="BioGRID-ORCS" id="54806">
    <property type="hits" value="6 hits in 1158 CRISPR screens"/>
</dbReference>
<dbReference type="CD-CODE" id="8C2F96ED">
    <property type="entry name" value="Centrosome"/>
</dbReference>
<dbReference type="ChiTaRS" id="AHI1">
    <property type="organism name" value="human"/>
</dbReference>
<dbReference type="EvolutionaryTrace" id="Q8N157"/>
<dbReference type="GeneWiki" id="AHI1"/>
<dbReference type="GenomeRNAi" id="54806"/>
<dbReference type="Pharos" id="Q8N157">
    <property type="development level" value="Tbio"/>
</dbReference>
<dbReference type="PRO" id="PR:Q8N157"/>
<dbReference type="Proteomes" id="UP000005640">
    <property type="component" value="Chromosome 6"/>
</dbReference>
<dbReference type="RNAct" id="Q8N157">
    <property type="molecule type" value="protein"/>
</dbReference>
<dbReference type="Bgee" id="ENSG00000135541">
    <property type="expression patterns" value="Expressed in pituitary gland and 190 other cell types or tissues"/>
</dbReference>
<dbReference type="ExpressionAtlas" id="Q8N157">
    <property type="expression patterns" value="baseline and differential"/>
</dbReference>
<dbReference type="GO" id="GO:0005912">
    <property type="term" value="C:adherens junction"/>
    <property type="evidence" value="ECO:0000314"/>
    <property type="project" value="UniProtKB"/>
</dbReference>
<dbReference type="GO" id="GO:0005911">
    <property type="term" value="C:cell-cell junction"/>
    <property type="evidence" value="ECO:0000314"/>
    <property type="project" value="UniProtKB"/>
</dbReference>
<dbReference type="GO" id="GO:0005814">
    <property type="term" value="C:centriole"/>
    <property type="evidence" value="ECO:0000250"/>
    <property type="project" value="UniProtKB"/>
</dbReference>
<dbReference type="GO" id="GO:0005813">
    <property type="term" value="C:centrosome"/>
    <property type="evidence" value="ECO:0000314"/>
    <property type="project" value="HPA"/>
</dbReference>
<dbReference type="GO" id="GO:0036064">
    <property type="term" value="C:ciliary basal body"/>
    <property type="evidence" value="ECO:0000314"/>
    <property type="project" value="UniProtKB"/>
</dbReference>
<dbReference type="GO" id="GO:0005929">
    <property type="term" value="C:cilium"/>
    <property type="evidence" value="ECO:0000314"/>
    <property type="project" value="HPA"/>
</dbReference>
<dbReference type="GO" id="GO:0005829">
    <property type="term" value="C:cytosol"/>
    <property type="evidence" value="ECO:0000304"/>
    <property type="project" value="Reactome"/>
</dbReference>
<dbReference type="GO" id="GO:0036038">
    <property type="term" value="C:MKS complex"/>
    <property type="evidence" value="ECO:0000250"/>
    <property type="project" value="UniProtKB"/>
</dbReference>
<dbReference type="GO" id="GO:0097730">
    <property type="term" value="C:non-motile cilium"/>
    <property type="evidence" value="ECO:0000250"/>
    <property type="project" value="UniProtKB"/>
</dbReference>
<dbReference type="GO" id="GO:0042802">
    <property type="term" value="F:identical protein binding"/>
    <property type="evidence" value="ECO:0000353"/>
    <property type="project" value="IntAct"/>
</dbReference>
<dbReference type="GO" id="GO:0007169">
    <property type="term" value="P:cell surface receptor protein tyrosine kinase signaling pathway"/>
    <property type="evidence" value="ECO:0000250"/>
    <property type="project" value="UniProtKB"/>
</dbReference>
<dbReference type="GO" id="GO:0007417">
    <property type="term" value="P:central nervous system development"/>
    <property type="evidence" value="ECO:0000250"/>
    <property type="project" value="UniProtKB"/>
</dbReference>
<dbReference type="GO" id="GO:0060271">
    <property type="term" value="P:cilium assembly"/>
    <property type="evidence" value="ECO:0000315"/>
    <property type="project" value="UniProtKB"/>
</dbReference>
<dbReference type="GO" id="GO:0035844">
    <property type="term" value="P:cloaca development"/>
    <property type="evidence" value="ECO:0000250"/>
    <property type="project" value="UniProtKB"/>
</dbReference>
<dbReference type="GO" id="GO:0001947">
    <property type="term" value="P:heart looping"/>
    <property type="evidence" value="ECO:0000250"/>
    <property type="project" value="UniProtKB"/>
</dbReference>
<dbReference type="GO" id="GO:0030902">
    <property type="term" value="P:hindbrain development"/>
    <property type="evidence" value="ECO:0000250"/>
    <property type="project" value="UniProtKB"/>
</dbReference>
<dbReference type="GO" id="GO:0001738">
    <property type="term" value="P:morphogenesis of a polarized epithelium"/>
    <property type="evidence" value="ECO:0000250"/>
    <property type="project" value="UniProtKB"/>
</dbReference>
<dbReference type="GO" id="GO:0044458">
    <property type="term" value="P:motile cilium assembly"/>
    <property type="evidence" value="ECO:0000318"/>
    <property type="project" value="GO_Central"/>
</dbReference>
<dbReference type="GO" id="GO:0043066">
    <property type="term" value="P:negative regulation of apoptotic process"/>
    <property type="evidence" value="ECO:0000250"/>
    <property type="project" value="UniProtKB"/>
</dbReference>
<dbReference type="GO" id="GO:0071599">
    <property type="term" value="P:otic vesicle development"/>
    <property type="evidence" value="ECO:0000250"/>
    <property type="project" value="UniProtKB"/>
</dbReference>
<dbReference type="GO" id="GO:0035845">
    <property type="term" value="P:photoreceptor cell outer segment organization"/>
    <property type="evidence" value="ECO:0000250"/>
    <property type="project" value="UniProtKB"/>
</dbReference>
<dbReference type="GO" id="GO:0030862">
    <property type="term" value="P:positive regulation of polarized epithelial cell differentiation"/>
    <property type="evidence" value="ECO:0000250"/>
    <property type="project" value="UniProtKB"/>
</dbReference>
<dbReference type="GO" id="GO:0002092">
    <property type="term" value="P:positive regulation of receptor internalization"/>
    <property type="evidence" value="ECO:0000250"/>
    <property type="project" value="UniProtKB"/>
</dbReference>
<dbReference type="GO" id="GO:0045944">
    <property type="term" value="P:positive regulation of transcription by RNA polymerase II"/>
    <property type="evidence" value="ECO:0000250"/>
    <property type="project" value="UniProtKB"/>
</dbReference>
<dbReference type="GO" id="GO:0039008">
    <property type="term" value="P:pronephric nephron tubule morphogenesis"/>
    <property type="evidence" value="ECO:0000250"/>
    <property type="project" value="UniProtKB"/>
</dbReference>
<dbReference type="GO" id="GO:0008104">
    <property type="term" value="P:protein localization"/>
    <property type="evidence" value="ECO:0000250"/>
    <property type="project" value="UniProtKB"/>
</dbReference>
<dbReference type="GO" id="GO:0050795">
    <property type="term" value="P:regulation of behavior"/>
    <property type="evidence" value="ECO:0000250"/>
    <property type="project" value="UniProtKB"/>
</dbReference>
<dbReference type="GO" id="GO:0010842">
    <property type="term" value="P:retina layer formation"/>
    <property type="evidence" value="ECO:0000250"/>
    <property type="project" value="UniProtKB"/>
</dbReference>
<dbReference type="GO" id="GO:0065001">
    <property type="term" value="P:specification of axis polarity"/>
    <property type="evidence" value="ECO:0000250"/>
    <property type="project" value="UniProtKB"/>
</dbReference>
<dbReference type="GO" id="GO:0016192">
    <property type="term" value="P:vesicle-mediated transport"/>
    <property type="evidence" value="ECO:0000250"/>
    <property type="project" value="UniProtKB"/>
</dbReference>
<dbReference type="CDD" id="cd11812">
    <property type="entry name" value="SH3_AHI-1"/>
    <property type="match status" value="1"/>
</dbReference>
<dbReference type="FunFam" id="2.130.10.10:FF:000112">
    <property type="entry name" value="jouberin isoform X2"/>
    <property type="match status" value="1"/>
</dbReference>
<dbReference type="FunFam" id="2.30.30.40:FF:000132">
    <property type="entry name" value="jouberin isoform X2"/>
    <property type="match status" value="1"/>
</dbReference>
<dbReference type="Gene3D" id="2.30.30.40">
    <property type="entry name" value="SH3 Domains"/>
    <property type="match status" value="1"/>
</dbReference>
<dbReference type="Gene3D" id="2.130.10.10">
    <property type="entry name" value="YVTN repeat-like/Quinoprotein amine dehydrogenase"/>
    <property type="match status" value="1"/>
</dbReference>
<dbReference type="InterPro" id="IPR035832">
    <property type="entry name" value="AHI1_SH3"/>
</dbReference>
<dbReference type="InterPro" id="IPR052803">
    <property type="entry name" value="Cilium-Associated_Jouberin"/>
</dbReference>
<dbReference type="InterPro" id="IPR036028">
    <property type="entry name" value="SH3-like_dom_sf"/>
</dbReference>
<dbReference type="InterPro" id="IPR001452">
    <property type="entry name" value="SH3_domain"/>
</dbReference>
<dbReference type="InterPro" id="IPR015943">
    <property type="entry name" value="WD40/YVTN_repeat-like_dom_sf"/>
</dbReference>
<dbReference type="InterPro" id="IPR036322">
    <property type="entry name" value="WD40_repeat_dom_sf"/>
</dbReference>
<dbReference type="InterPro" id="IPR001680">
    <property type="entry name" value="WD40_rpt"/>
</dbReference>
<dbReference type="PANTHER" id="PTHR44499">
    <property type="entry name" value="JOUBERIN"/>
    <property type="match status" value="1"/>
</dbReference>
<dbReference type="PANTHER" id="PTHR44499:SF1">
    <property type="entry name" value="JOUBERIN"/>
    <property type="match status" value="1"/>
</dbReference>
<dbReference type="Pfam" id="PF00018">
    <property type="entry name" value="SH3_1"/>
    <property type="match status" value="1"/>
</dbReference>
<dbReference type="Pfam" id="PF00400">
    <property type="entry name" value="WD40"/>
    <property type="match status" value="4"/>
</dbReference>
<dbReference type="PRINTS" id="PR00452">
    <property type="entry name" value="SH3DOMAIN"/>
</dbReference>
<dbReference type="SMART" id="SM00326">
    <property type="entry name" value="SH3"/>
    <property type="match status" value="1"/>
</dbReference>
<dbReference type="SMART" id="SM00320">
    <property type="entry name" value="WD40"/>
    <property type="match status" value="6"/>
</dbReference>
<dbReference type="SUPFAM" id="SSF50044">
    <property type="entry name" value="SH3-domain"/>
    <property type="match status" value="1"/>
</dbReference>
<dbReference type="SUPFAM" id="SSF50978">
    <property type="entry name" value="WD40 repeat-like"/>
    <property type="match status" value="1"/>
</dbReference>
<dbReference type="PROSITE" id="PS50002">
    <property type="entry name" value="SH3"/>
    <property type="match status" value="1"/>
</dbReference>
<dbReference type="PROSITE" id="PS50082">
    <property type="entry name" value="WD_REPEATS_2"/>
    <property type="match status" value="4"/>
</dbReference>
<dbReference type="PROSITE" id="PS50294">
    <property type="entry name" value="WD_REPEATS_REGION"/>
    <property type="match status" value="1"/>
</dbReference>
<protein>
    <recommendedName>
        <fullName>Jouberin</fullName>
    </recommendedName>
    <alternativeName>
        <fullName>Abelson helper integration site 1 protein homolog</fullName>
        <shortName>AHI-1</shortName>
    </alternativeName>
</protein>
<accession>Q8N157</accession>
<accession>E1P584</accession>
<accession>Q4FD35</accession>
<accession>Q504T3</accession>
<accession>Q5TCP9</accession>
<accession>Q6P098</accession>
<accession>Q6PIT6</accession>
<accession>Q8NDX0</accession>
<accession>Q9H0H2</accession>
<gene>
    <name type="primary">AHI1</name>
</gene>
<feature type="chain" id="PRO_0000050838" description="Jouberin">
    <location>
        <begin position="1"/>
        <end position="1196"/>
    </location>
</feature>
<feature type="repeat" description="WD 1">
    <location>
        <begin position="607"/>
        <end position="649"/>
    </location>
</feature>
<feature type="repeat" description="WD 2">
    <location>
        <begin position="652"/>
        <end position="691"/>
    </location>
</feature>
<feature type="repeat" description="WD 3">
    <location>
        <begin position="695"/>
        <end position="735"/>
    </location>
</feature>
<feature type="repeat" description="WD 4">
    <location>
        <begin position="742"/>
        <end position="781"/>
    </location>
</feature>
<feature type="repeat" description="WD 5">
    <location>
        <begin position="797"/>
        <end position="837"/>
    </location>
</feature>
<feature type="repeat" description="WD 6">
    <location>
        <begin position="841"/>
        <end position="880"/>
    </location>
</feature>
<feature type="repeat" description="WD 7">
    <location>
        <begin position="885"/>
        <end position="926"/>
    </location>
</feature>
<feature type="domain" description="SH3" evidence="3">
    <location>
        <begin position="1051"/>
        <end position="1111"/>
    </location>
</feature>
<feature type="region of interest" description="Disordered" evidence="4">
    <location>
        <begin position="56"/>
        <end position="186"/>
    </location>
</feature>
<feature type="region of interest" description="Interaction with HAP1" evidence="14">
    <location>
        <begin position="141"/>
        <end position="434"/>
    </location>
</feature>
<feature type="region of interest" description="Disordered" evidence="4">
    <location>
        <begin position="215"/>
        <end position="242"/>
    </location>
</feature>
<feature type="region of interest" description="Disordered" evidence="4">
    <location>
        <begin position="254"/>
        <end position="327"/>
    </location>
</feature>
<feature type="region of interest" description="Disordered" evidence="4">
    <location>
        <begin position="1115"/>
        <end position="1196"/>
    </location>
</feature>
<feature type="coiled-coil region" evidence="2">
    <location>
        <begin position="13"/>
        <end position="45"/>
    </location>
</feature>
<feature type="compositionally biased region" description="Polar residues" evidence="4">
    <location>
        <begin position="80"/>
        <end position="91"/>
    </location>
</feature>
<feature type="compositionally biased region" description="Basic residues" evidence="4">
    <location>
        <begin position="92"/>
        <end position="101"/>
    </location>
</feature>
<feature type="compositionally biased region" description="Polar residues" evidence="4">
    <location>
        <begin position="102"/>
        <end position="113"/>
    </location>
</feature>
<feature type="compositionally biased region" description="Basic and acidic residues" evidence="4">
    <location>
        <begin position="141"/>
        <end position="154"/>
    </location>
</feature>
<feature type="compositionally biased region" description="Basic and acidic residues" evidence="4">
    <location>
        <begin position="166"/>
        <end position="179"/>
    </location>
</feature>
<feature type="compositionally biased region" description="Basic and acidic residues" evidence="4">
    <location>
        <begin position="224"/>
        <end position="233"/>
    </location>
</feature>
<feature type="compositionally biased region" description="Basic residues" evidence="4">
    <location>
        <begin position="300"/>
        <end position="309"/>
    </location>
</feature>
<feature type="compositionally biased region" description="Basic and acidic residues" evidence="4">
    <location>
        <begin position="1117"/>
        <end position="1136"/>
    </location>
</feature>
<feature type="compositionally biased region" description="Basic and acidic residues" evidence="4">
    <location>
        <begin position="1161"/>
        <end position="1182"/>
    </location>
</feature>
<feature type="modified residue" description="Phosphoserine" evidence="18">
    <location>
        <position position="45"/>
    </location>
</feature>
<feature type="modified residue" description="Phosphoserine" evidence="18">
    <location>
        <position position="1002"/>
    </location>
</feature>
<feature type="modified residue" description="Phosphoserine" evidence="18">
    <location>
        <position position="1123"/>
    </location>
</feature>
<feature type="splice variant" id="VSP_015353" description="In isoform 3." evidence="16">
    <original>ACRIPNKHLFSLNAGE</original>
    <variation>ENEDVFVLISPTMEEY</variation>
    <location>
        <begin position="594"/>
        <end position="609"/>
    </location>
</feature>
<feature type="splice variant" id="VSP_015354" description="In isoform 3." evidence="16">
    <location>
        <begin position="610"/>
        <end position="1196"/>
    </location>
</feature>
<feature type="splice variant" id="VSP_015355" description="In isoform 2." evidence="15">
    <original>GIISIERKPCNHQVDTA</original>
    <variation>DSHFAEFNTCILWWKKH</variation>
    <location>
        <begin position="1037"/>
        <end position="1053"/>
    </location>
</feature>
<feature type="splice variant" id="VSP_015356" description="In isoform 2." evidence="15">
    <location>
        <begin position="1054"/>
        <end position="1196"/>
    </location>
</feature>
<feature type="sequence variant" id="VAR_037892" evidence="9">
    <original>I</original>
    <variation>N</variation>
    <location>
        <position position="49"/>
    </location>
</feature>
<feature type="sequence variant" id="VAR_071194" description="In JBTS3; loss of localization at cilium basal body and cell-cell junctions; dbSNP:rs397514726." evidence="14">
    <original>R</original>
    <variation>L</variation>
    <location>
        <position position="351"/>
    </location>
</feature>
<feature type="sequence variant" id="VAR_023391" description="In JBTS3; alters interaction with HAP1 and NPHP1; loss of NPHP1AHI1(2):NPHP1(2) tetramers; loss of localization at cilium basal body and cell-cell junctions; loss of positive modulation of classical Wnt signaling; decreased interaction with CTNNB1; dbSNP:rs121434350." evidence="6 7 11 14">
    <original>V</original>
    <variation>D</variation>
    <location>
        <position position="443"/>
    </location>
</feature>
<feature type="sequence variant" id="VAR_037893" description="In dbSNP:rs35433555." evidence="8 9">
    <original>R</original>
    <variation>H</variation>
    <location>
        <position position="548"/>
    </location>
</feature>
<feature type="sequence variant" id="VAR_080417" description="In JBTS3; dbSNP:rs267606641." evidence="9">
    <location>
        <begin position="589"/>
        <end position="1196"/>
    </location>
</feature>
<feature type="sequence variant" id="VAR_076820" description="In JBTS3; dbSNP:rs772989270." evidence="8">
    <original>T</original>
    <variation>I</variation>
    <location>
        <position position="671"/>
    </location>
</feature>
<feature type="sequence variant" id="VAR_076821" description="In JBTS3; dbSNP:rs863225134." evidence="8">
    <original>D</original>
    <variation>G</variation>
    <location>
        <position position="719"/>
    </location>
</feature>
<feature type="sequence variant" id="VAR_037894" description="In JBTS3; loss of localization at the primary cilium; loss of positive modulation of classical Wnt signaling; no effect on interaction with CTNNB1; dbSNP:rs121434351." evidence="9 11">
    <original>R</original>
    <variation>Q</variation>
    <location>
        <position position="723"/>
    </location>
</feature>
<feature type="sequence variant" id="VAR_037895" description="In dbSNP:rs794727174." evidence="9">
    <original>S</original>
    <variation>L</variation>
    <location>
        <position position="761"/>
    </location>
</feature>
<feature type="sequence variant" id="VAR_037896" description="In dbSNP:rs13312995." evidence="8 9">
    <original>R</original>
    <variation>W</variation>
    <location>
        <position position="830"/>
    </location>
</feature>
<feature type="sequence variant" id="VAR_037897" description="In dbSNP:rs199736888." evidence="9">
    <original>T</original>
    <variation>S</variation>
    <location>
        <position position="856"/>
    </location>
</feature>
<feature type="sequence variant" id="VAR_076822" description="In JBTS3; loss of localization at the primary cilium; loss of positive modulation of classical Wnt signaling; no effect on interaction with CTNNB1; dbSNP:rs863225135." evidence="8 11">
    <original>H</original>
    <variation>R</variation>
    <location>
        <position position="896"/>
    </location>
</feature>
<feature type="sequence variant" id="VAR_037898" description="In dbSNP:rs41288013." evidence="9">
    <original>Y</original>
    <variation>C</variation>
    <location>
        <position position="933"/>
    </location>
</feature>
<feature type="sequence variant" id="VAR_037899" description="In dbSNP:rs6940875.">
    <original>Q</original>
    <variation>P</variation>
    <location>
        <position position="1018"/>
    </location>
</feature>
<feature type="sequence variant" id="VAR_068171" description="In dbSNP:rs148000791." evidence="12">
    <original>E</original>
    <variation>G</variation>
    <location>
        <position position="1086"/>
    </location>
</feature>
<feature type="sequence variant" id="VAR_037900" description="In dbSNP:rs117447608." evidence="9">
    <original>S</original>
    <variation>F</variation>
    <location>
        <position position="1123"/>
    </location>
</feature>
<feature type="sequence variant" id="VAR_037901" description="In dbSNP:rs201148693." evidence="9">
    <original>P</original>
    <variation>S</variation>
    <location>
        <position position="1140"/>
    </location>
</feature>
<feature type="sequence conflict" description="In Ref. 3; CAB66731." evidence="17" ref="3">
    <original>E</original>
    <variation>K</variation>
    <location>
        <position position="18"/>
    </location>
</feature>
<feature type="sequence conflict" description="In Ref. 2; AAY99645." evidence="17" ref="2">
    <original>L</original>
    <variation>P</variation>
    <location>
        <position position="553"/>
    </location>
</feature>
<feature type="strand" evidence="19">
    <location>
        <begin position="1055"/>
        <end position="1060"/>
    </location>
</feature>
<feature type="strand" evidence="19">
    <location>
        <begin position="1077"/>
        <end position="1083"/>
    </location>
</feature>
<feature type="strand" evidence="19">
    <location>
        <begin position="1085"/>
        <end position="1094"/>
    </location>
</feature>
<feature type="strand" evidence="19">
    <location>
        <begin position="1097"/>
        <end position="1102"/>
    </location>
</feature>
<feature type="helix" evidence="19">
    <location>
        <begin position="1103"/>
        <end position="1105"/>
    </location>
</feature>
<feature type="strand" evidence="19">
    <location>
        <begin position="1106"/>
        <end position="1108"/>
    </location>
</feature>
<feature type="helix" evidence="19">
    <location>
        <begin position="1109"/>
        <end position="1114"/>
    </location>
</feature>
<name>AHI1_HUMAN</name>
<sequence length="1196" mass="137115">MPTAESEAKVKTKVRFEELLKTHSDLMREKKKLKKKLVRSEENISPDTIRSNLHYMKETTSDDPDTIRSNLPHIKETTSDDVSAANTNNLKKSTRVTKNKLRNTQLATENPNGDASVEEDKQGKPNKKVIKTVPQLTTQDLKPETPENKVDSTHQKTHTKPQPGVDHQKSEKANEGREETDLEEDEELMQAYQCHVTEEMAKEIKRKIRKKLKEQLTYFPSDTLFHDDKLSSEKRKKKKEVPVFSKAETSTLTISGDTVEGEQKKESSVRSVSSDSHQDDEISSMEQSTEDSMQDDTKPKPKKTKKKTKAVADNNEDVDGDGVHEITSRDSPVYPKCLLDDDLVLGVYIHRTDRLKSDFMISHPMVKIHVVDEHTGQYVKKDDSGRPVSSYYEKENVDYILPIMTQPYDFKQLKSRLPEWEEQIVFNENFPYLLRGSDESPKVILFFEILDFLSVDEIKNNSEVQNQECGFRKIAWAFLKLLGANGNANINSKLRLQLYYPPTKPRSPLSVVEAFEWWSKCPRNHYPSTLYVTVRGLKVPDCIKPSYRSMMALQEEKGKPVHCERHHESSSVDTEPGLEESKEVIKWKRLPGQACRIPNKHLFSLNAGERGCFCLDFSHNGRILAAACASRDGYPIILYEIPSGRFMRELCGHLNIIYDLSWSKDDHYILTSSSDGTARIWKNEINNTNTFRVLPHPSFVYTAKFHPAVRELVVTGCYDSMIRIWKVEMREDSAILVRQFDVHKSFINSLCFDTEGHHMYSGDCTGVIVVWNTYVKINDLEHSVHHWTINKEIKETEFKGIPISYLEIHPNGKRLLIHTKDSTLRIMDLRILVARKFVGAANYREKIHSTLTPCGTFLFAGSEDGIVYVWNPETGEQVAMYSDLPFKSPIRDISYHPFENMVAFCAFGQNEPILLYIYDFHVAQQEAEMFKRYNGTFPLPGIHQSQDALCTCPKLPHQGSFQIDEFVHTESSSTKMQLVKQRLETVTEVIRSCAAKVNKNLSFTSPPAVSSQQSKLKQSNMLTAQEILHQFGFTQTGIISIERKPCNHQVDTAPTVVALYDYTANRSDELTIHRGDIIRVFFKDNEDWWYGSIGKGQEGYFPANHVASETLYQELPPEIKERSPPLSPEEKTKIEKSPAPQKQSINKNKSQDFRLGSESMTHSEMRKEQSHEDQGHIMDTRMRKNKQAGRKVTLIE</sequence>